<feature type="chain" id="PRO_0000338782" description="Translation initiation factor IF-1">
    <location>
        <begin position="1"/>
        <end position="72"/>
    </location>
</feature>
<feature type="domain" description="S1-like" evidence="1">
    <location>
        <begin position="1"/>
        <end position="72"/>
    </location>
</feature>
<name>IF1_BURMS</name>
<accession>A1V882</accession>
<evidence type="ECO:0000255" key="1">
    <source>
        <dbReference type="HAMAP-Rule" id="MF_00075"/>
    </source>
</evidence>
<gene>
    <name evidence="1" type="primary">infA</name>
    <name type="ordered locus">BMASAVP1_A3148</name>
</gene>
<protein>
    <recommendedName>
        <fullName evidence="1">Translation initiation factor IF-1</fullName>
    </recommendedName>
</protein>
<comment type="function">
    <text evidence="1">One of the essential components for the initiation of protein synthesis. Stabilizes the binding of IF-2 and IF-3 on the 30S subunit to which N-formylmethionyl-tRNA(fMet) subsequently binds. Helps modulate mRNA selection, yielding the 30S pre-initiation complex (PIC). Upon addition of the 50S ribosomal subunit IF-1, IF-2 and IF-3 are released leaving the mature 70S translation initiation complex.</text>
</comment>
<comment type="subunit">
    <text evidence="1">Component of the 30S ribosomal translation pre-initiation complex which assembles on the 30S ribosome in the order IF-2 and IF-3, IF-1 and N-formylmethionyl-tRNA(fMet); mRNA recruitment can occur at any time during PIC assembly.</text>
</comment>
<comment type="subcellular location">
    <subcellularLocation>
        <location evidence="1">Cytoplasm</location>
    </subcellularLocation>
</comment>
<comment type="similarity">
    <text evidence="1">Belongs to the IF-1 family.</text>
</comment>
<organism>
    <name type="scientific">Burkholderia mallei (strain SAVP1)</name>
    <dbReference type="NCBI Taxonomy" id="320388"/>
    <lineage>
        <taxon>Bacteria</taxon>
        <taxon>Pseudomonadati</taxon>
        <taxon>Pseudomonadota</taxon>
        <taxon>Betaproteobacteria</taxon>
        <taxon>Burkholderiales</taxon>
        <taxon>Burkholderiaceae</taxon>
        <taxon>Burkholderia</taxon>
        <taxon>pseudomallei group</taxon>
    </lineage>
</organism>
<reference key="1">
    <citation type="journal article" date="2010" name="Genome Biol. Evol.">
        <title>Continuing evolution of Burkholderia mallei through genome reduction and large-scale rearrangements.</title>
        <authorList>
            <person name="Losada L."/>
            <person name="Ronning C.M."/>
            <person name="DeShazer D."/>
            <person name="Woods D."/>
            <person name="Fedorova N."/>
            <person name="Kim H.S."/>
            <person name="Shabalina S.A."/>
            <person name="Pearson T.R."/>
            <person name="Brinkac L."/>
            <person name="Tan P."/>
            <person name="Nandi T."/>
            <person name="Crabtree J."/>
            <person name="Badger J."/>
            <person name="Beckstrom-Sternberg S."/>
            <person name="Saqib M."/>
            <person name="Schutzer S.E."/>
            <person name="Keim P."/>
            <person name="Nierman W.C."/>
        </authorList>
    </citation>
    <scope>NUCLEOTIDE SEQUENCE [LARGE SCALE GENOMIC DNA]</scope>
    <source>
        <strain>SAVP1</strain>
    </source>
</reference>
<sequence>MAKDDVIQMQGEVIENLPNATFRVKLENGHVVLGHISGKMRMHYIRIFPGDKVTVELTPYDLSRARIVFRAK</sequence>
<keyword id="KW-0963">Cytoplasm</keyword>
<keyword id="KW-0396">Initiation factor</keyword>
<keyword id="KW-0648">Protein biosynthesis</keyword>
<keyword id="KW-0694">RNA-binding</keyword>
<keyword id="KW-0699">rRNA-binding</keyword>
<proteinExistence type="inferred from homology"/>
<dbReference type="EMBL" id="CP000526">
    <property type="protein sequence ID" value="ABM50259.1"/>
    <property type="molecule type" value="Genomic_DNA"/>
</dbReference>
<dbReference type="RefSeq" id="WP_004185257.1">
    <property type="nucleotide sequence ID" value="NC_008785.1"/>
</dbReference>
<dbReference type="BMRB" id="A1V882"/>
<dbReference type="SMR" id="A1V882"/>
<dbReference type="GeneID" id="92980298"/>
<dbReference type="KEGG" id="bmv:BMASAVP1_A3148"/>
<dbReference type="HOGENOM" id="CLU_151267_1_0_4"/>
<dbReference type="GO" id="GO:0005829">
    <property type="term" value="C:cytosol"/>
    <property type="evidence" value="ECO:0007669"/>
    <property type="project" value="TreeGrafter"/>
</dbReference>
<dbReference type="GO" id="GO:0043022">
    <property type="term" value="F:ribosome binding"/>
    <property type="evidence" value="ECO:0007669"/>
    <property type="project" value="UniProtKB-UniRule"/>
</dbReference>
<dbReference type="GO" id="GO:0019843">
    <property type="term" value="F:rRNA binding"/>
    <property type="evidence" value="ECO:0007669"/>
    <property type="project" value="UniProtKB-UniRule"/>
</dbReference>
<dbReference type="GO" id="GO:0003743">
    <property type="term" value="F:translation initiation factor activity"/>
    <property type="evidence" value="ECO:0007669"/>
    <property type="project" value="UniProtKB-UniRule"/>
</dbReference>
<dbReference type="CDD" id="cd04451">
    <property type="entry name" value="S1_IF1"/>
    <property type="match status" value="1"/>
</dbReference>
<dbReference type="FunFam" id="2.40.50.140:FF:000002">
    <property type="entry name" value="Translation initiation factor IF-1"/>
    <property type="match status" value="1"/>
</dbReference>
<dbReference type="Gene3D" id="2.40.50.140">
    <property type="entry name" value="Nucleic acid-binding proteins"/>
    <property type="match status" value="1"/>
</dbReference>
<dbReference type="HAMAP" id="MF_00075">
    <property type="entry name" value="IF_1"/>
    <property type="match status" value="1"/>
</dbReference>
<dbReference type="InterPro" id="IPR012340">
    <property type="entry name" value="NA-bd_OB-fold"/>
</dbReference>
<dbReference type="InterPro" id="IPR006196">
    <property type="entry name" value="RNA-binding_domain_S1_IF1"/>
</dbReference>
<dbReference type="InterPro" id="IPR003029">
    <property type="entry name" value="S1_domain"/>
</dbReference>
<dbReference type="InterPro" id="IPR004368">
    <property type="entry name" value="TIF_IF1"/>
</dbReference>
<dbReference type="NCBIfam" id="TIGR00008">
    <property type="entry name" value="infA"/>
    <property type="match status" value="1"/>
</dbReference>
<dbReference type="PANTHER" id="PTHR33370">
    <property type="entry name" value="TRANSLATION INITIATION FACTOR IF-1, CHLOROPLASTIC"/>
    <property type="match status" value="1"/>
</dbReference>
<dbReference type="PANTHER" id="PTHR33370:SF1">
    <property type="entry name" value="TRANSLATION INITIATION FACTOR IF-1, CHLOROPLASTIC"/>
    <property type="match status" value="1"/>
</dbReference>
<dbReference type="Pfam" id="PF01176">
    <property type="entry name" value="eIF-1a"/>
    <property type="match status" value="1"/>
</dbReference>
<dbReference type="SMART" id="SM00316">
    <property type="entry name" value="S1"/>
    <property type="match status" value="1"/>
</dbReference>
<dbReference type="SUPFAM" id="SSF50249">
    <property type="entry name" value="Nucleic acid-binding proteins"/>
    <property type="match status" value="1"/>
</dbReference>
<dbReference type="PROSITE" id="PS50832">
    <property type="entry name" value="S1_IF1_TYPE"/>
    <property type="match status" value="1"/>
</dbReference>